<accession>A5FJ93</accession>
<feature type="chain" id="PRO_1000079498" description="NAD kinase">
    <location>
        <begin position="1"/>
        <end position="294"/>
    </location>
</feature>
<feature type="active site" description="Proton acceptor" evidence="1">
    <location>
        <position position="74"/>
    </location>
</feature>
<feature type="binding site" evidence="1">
    <location>
        <begin position="74"/>
        <end position="75"/>
    </location>
    <ligand>
        <name>NAD(+)</name>
        <dbReference type="ChEBI" id="CHEBI:57540"/>
    </ligand>
</feature>
<feature type="binding site" evidence="1">
    <location>
        <position position="79"/>
    </location>
    <ligand>
        <name>NAD(+)</name>
        <dbReference type="ChEBI" id="CHEBI:57540"/>
    </ligand>
</feature>
<feature type="binding site" evidence="1">
    <location>
        <begin position="149"/>
        <end position="150"/>
    </location>
    <ligand>
        <name>NAD(+)</name>
        <dbReference type="ChEBI" id="CHEBI:57540"/>
    </ligand>
</feature>
<feature type="binding site" evidence="1">
    <location>
        <position position="179"/>
    </location>
    <ligand>
        <name>NAD(+)</name>
        <dbReference type="ChEBI" id="CHEBI:57540"/>
    </ligand>
</feature>
<feature type="binding site" evidence="1">
    <location>
        <begin position="190"/>
        <end position="195"/>
    </location>
    <ligand>
        <name>NAD(+)</name>
        <dbReference type="ChEBI" id="CHEBI:57540"/>
    </ligand>
</feature>
<feature type="binding site" evidence="1">
    <location>
        <position position="214"/>
    </location>
    <ligand>
        <name>NAD(+)</name>
        <dbReference type="ChEBI" id="CHEBI:57540"/>
    </ligand>
</feature>
<proteinExistence type="inferred from homology"/>
<name>NADK_FLAJ1</name>
<reference key="1">
    <citation type="journal article" date="2009" name="Appl. Environ. Microbiol.">
        <title>Novel features of the polysaccharide-digesting gliding bacterium Flavobacterium johnsoniae as revealed by genome sequence analysis.</title>
        <authorList>
            <person name="McBride M.J."/>
            <person name="Xie G."/>
            <person name="Martens E.C."/>
            <person name="Lapidus A."/>
            <person name="Henrissat B."/>
            <person name="Rhodes R.G."/>
            <person name="Goltsman E."/>
            <person name="Wang W."/>
            <person name="Xu J."/>
            <person name="Hunnicutt D.W."/>
            <person name="Staroscik A.M."/>
            <person name="Hoover T.R."/>
            <person name="Cheng Y.Q."/>
            <person name="Stein J.L."/>
        </authorList>
    </citation>
    <scope>NUCLEOTIDE SEQUENCE [LARGE SCALE GENOMIC DNA]</scope>
    <source>
        <strain>ATCC 17061 / DSM 2064 / JCM 8514 / BCRC 14874 / CCUG 350202 / NBRC 14942 / NCIMB 11054 / UW101</strain>
    </source>
</reference>
<sequence length="294" mass="33085">MKIAIYGQYYQNSTEPIIKDIFAFFNSNNVEMVIEENFLNMLYEKQLVKKDYKTFPSNSALDNSFEMLISIGGDGTILRAAAFVRNSGVPLLGINAGRLGFLAKVQKENIDILLQYVINQNYTTSERTLLGLTCEPFNEAFKELNFAMNEVTVSRKDTTSMITVETYLNNEYLNSYWADGLIISTPTGSTGYSLSCGGPILTPDVKSLVITPIAPHNLTARPLVIPDDTEITLRVTGREDQYLVSLDSRISSVQNESVLKIKKTDYKIKMVEIPGETFLKTLRNKLLWGEDKRN</sequence>
<protein>
    <recommendedName>
        <fullName evidence="1">NAD kinase</fullName>
        <ecNumber evidence="1">2.7.1.23</ecNumber>
    </recommendedName>
    <alternativeName>
        <fullName evidence="1">ATP-dependent NAD kinase</fullName>
    </alternativeName>
</protein>
<gene>
    <name evidence="1" type="primary">nadK</name>
    <name type="ordered locus">Fjoh_1693</name>
</gene>
<dbReference type="EC" id="2.7.1.23" evidence="1"/>
<dbReference type="EMBL" id="CP000685">
    <property type="protein sequence ID" value="ABQ04725.1"/>
    <property type="molecule type" value="Genomic_DNA"/>
</dbReference>
<dbReference type="RefSeq" id="WP_012023769.1">
    <property type="nucleotide sequence ID" value="NC_009441.1"/>
</dbReference>
<dbReference type="SMR" id="A5FJ93"/>
<dbReference type="STRING" id="376686.Fjoh_1693"/>
<dbReference type="KEGG" id="fjo:Fjoh_1693"/>
<dbReference type="eggNOG" id="COG0061">
    <property type="taxonomic scope" value="Bacteria"/>
</dbReference>
<dbReference type="HOGENOM" id="CLU_008831_0_3_10"/>
<dbReference type="OrthoDB" id="9774737at2"/>
<dbReference type="Proteomes" id="UP000006694">
    <property type="component" value="Chromosome"/>
</dbReference>
<dbReference type="GO" id="GO:0005737">
    <property type="term" value="C:cytoplasm"/>
    <property type="evidence" value="ECO:0007669"/>
    <property type="project" value="UniProtKB-SubCell"/>
</dbReference>
<dbReference type="GO" id="GO:0005524">
    <property type="term" value="F:ATP binding"/>
    <property type="evidence" value="ECO:0007669"/>
    <property type="project" value="UniProtKB-KW"/>
</dbReference>
<dbReference type="GO" id="GO:0046872">
    <property type="term" value="F:metal ion binding"/>
    <property type="evidence" value="ECO:0007669"/>
    <property type="project" value="UniProtKB-UniRule"/>
</dbReference>
<dbReference type="GO" id="GO:0051287">
    <property type="term" value="F:NAD binding"/>
    <property type="evidence" value="ECO:0007669"/>
    <property type="project" value="UniProtKB-ARBA"/>
</dbReference>
<dbReference type="GO" id="GO:0003951">
    <property type="term" value="F:NAD+ kinase activity"/>
    <property type="evidence" value="ECO:0007669"/>
    <property type="project" value="UniProtKB-UniRule"/>
</dbReference>
<dbReference type="GO" id="GO:0019674">
    <property type="term" value="P:NAD metabolic process"/>
    <property type="evidence" value="ECO:0007669"/>
    <property type="project" value="InterPro"/>
</dbReference>
<dbReference type="GO" id="GO:0006741">
    <property type="term" value="P:NADP biosynthetic process"/>
    <property type="evidence" value="ECO:0007669"/>
    <property type="project" value="UniProtKB-UniRule"/>
</dbReference>
<dbReference type="Gene3D" id="3.40.50.10330">
    <property type="entry name" value="Probable inorganic polyphosphate/atp-NAD kinase, domain 1"/>
    <property type="match status" value="1"/>
</dbReference>
<dbReference type="Gene3D" id="2.60.200.30">
    <property type="entry name" value="Probable inorganic polyphosphate/atp-NAD kinase, domain 2"/>
    <property type="match status" value="1"/>
</dbReference>
<dbReference type="HAMAP" id="MF_00361">
    <property type="entry name" value="NAD_kinase"/>
    <property type="match status" value="1"/>
</dbReference>
<dbReference type="InterPro" id="IPR017438">
    <property type="entry name" value="ATP-NAD_kinase_N"/>
</dbReference>
<dbReference type="InterPro" id="IPR017437">
    <property type="entry name" value="ATP-NAD_kinase_PpnK-typ_C"/>
</dbReference>
<dbReference type="InterPro" id="IPR016064">
    <property type="entry name" value="NAD/diacylglycerol_kinase_sf"/>
</dbReference>
<dbReference type="InterPro" id="IPR002504">
    <property type="entry name" value="NADK"/>
</dbReference>
<dbReference type="NCBIfam" id="NF002521">
    <property type="entry name" value="PRK01911.1"/>
    <property type="match status" value="1"/>
</dbReference>
<dbReference type="PANTHER" id="PTHR20275">
    <property type="entry name" value="NAD KINASE"/>
    <property type="match status" value="1"/>
</dbReference>
<dbReference type="PANTHER" id="PTHR20275:SF0">
    <property type="entry name" value="NAD KINASE"/>
    <property type="match status" value="1"/>
</dbReference>
<dbReference type="Pfam" id="PF01513">
    <property type="entry name" value="NAD_kinase"/>
    <property type="match status" value="1"/>
</dbReference>
<dbReference type="Pfam" id="PF20143">
    <property type="entry name" value="NAD_kinase_C"/>
    <property type="match status" value="1"/>
</dbReference>
<dbReference type="SUPFAM" id="SSF111331">
    <property type="entry name" value="NAD kinase/diacylglycerol kinase-like"/>
    <property type="match status" value="1"/>
</dbReference>
<keyword id="KW-0067">ATP-binding</keyword>
<keyword id="KW-0963">Cytoplasm</keyword>
<keyword id="KW-0418">Kinase</keyword>
<keyword id="KW-0520">NAD</keyword>
<keyword id="KW-0521">NADP</keyword>
<keyword id="KW-0547">Nucleotide-binding</keyword>
<keyword id="KW-0808">Transferase</keyword>
<comment type="function">
    <text evidence="1">Involved in the regulation of the intracellular balance of NAD and NADP, and is a key enzyme in the biosynthesis of NADP. Catalyzes specifically the phosphorylation on 2'-hydroxyl of the adenosine moiety of NAD to yield NADP.</text>
</comment>
<comment type="catalytic activity">
    <reaction evidence="1">
        <text>NAD(+) + ATP = ADP + NADP(+) + H(+)</text>
        <dbReference type="Rhea" id="RHEA:18629"/>
        <dbReference type="ChEBI" id="CHEBI:15378"/>
        <dbReference type="ChEBI" id="CHEBI:30616"/>
        <dbReference type="ChEBI" id="CHEBI:57540"/>
        <dbReference type="ChEBI" id="CHEBI:58349"/>
        <dbReference type="ChEBI" id="CHEBI:456216"/>
        <dbReference type="EC" id="2.7.1.23"/>
    </reaction>
</comment>
<comment type="cofactor">
    <cofactor evidence="1">
        <name>a divalent metal cation</name>
        <dbReference type="ChEBI" id="CHEBI:60240"/>
    </cofactor>
</comment>
<comment type="subcellular location">
    <subcellularLocation>
        <location evidence="1">Cytoplasm</location>
    </subcellularLocation>
</comment>
<comment type="similarity">
    <text evidence="1">Belongs to the NAD kinase family.</text>
</comment>
<organism>
    <name type="scientific">Flavobacterium johnsoniae (strain ATCC 17061 / DSM 2064 / JCM 8514 / BCRC 14874 / CCUG 350202 / NBRC 14942 / NCIMB 11054 / UW101)</name>
    <name type="common">Cytophaga johnsonae</name>
    <dbReference type="NCBI Taxonomy" id="376686"/>
    <lineage>
        <taxon>Bacteria</taxon>
        <taxon>Pseudomonadati</taxon>
        <taxon>Bacteroidota</taxon>
        <taxon>Flavobacteriia</taxon>
        <taxon>Flavobacteriales</taxon>
        <taxon>Flavobacteriaceae</taxon>
        <taxon>Flavobacterium</taxon>
    </lineage>
</organism>
<evidence type="ECO:0000255" key="1">
    <source>
        <dbReference type="HAMAP-Rule" id="MF_00361"/>
    </source>
</evidence>